<sequence length="569" mass="60527">MPYRISRQAYAETYGPTTGDRIRLADTDLILEVEKDYTVYGDEVKFGGGKVIRDGMGQSQTPRAEGAVDTVITNALILDWWGIVKADVGLKDGRIVGIGKAGNPDTQEGVTIVVGPGTEAIAGEGHILTAGGIDTHIHFICPQQIETALASGVTTLMGGGTGPATGTNATTCTPGAFHIGRMLQAAEGLPVNLGFFGKGNASTPEALEEQVRAGACGLKLHEDWGTTPATIDACLSVADRMDVQVCIHTDTLNEAGFVEDTIAAIKGRTIHTFHTEGAGGGHAPDIIKICGEANVLPSSTNPTRPYTRNTLEEHLDMLMVCHHLDPKIPEDVAFAESRIRRETIAAEDILHDLGSFSIIASDSQAMGRVGEVITRTFQTAHKMKVQRGALPEDSARNDNHRLKRYIAKVTINPALAHGISSEVGSIETGKLADLVLWKPGFFGIRPELVVKGGSIVWAQMGDANASIPTPGPVHGRPMFGAFGKALAPSCLTFVSEAAMDADIQRQLGLERTCMAVRDTRSVGKSALKLNSALPKVSVDPQTYEVFADGELLTCEPAEVLPLAQRYLLL</sequence>
<reference key="1">
    <citation type="submission" date="2005-07" db="EMBL/GenBank/DDBJ databases">
        <title>Complete sequence of Synechococcus sp. CC9605.</title>
        <authorList>
            <consortium name="US DOE Joint Genome Institute"/>
            <person name="Copeland A."/>
            <person name="Lucas S."/>
            <person name="Lapidus A."/>
            <person name="Barry K."/>
            <person name="Detter J.C."/>
            <person name="Glavina T."/>
            <person name="Hammon N."/>
            <person name="Israni S."/>
            <person name="Pitluck S."/>
            <person name="Schmutz J."/>
            <person name="Martinez M."/>
            <person name="Larimer F."/>
            <person name="Land M."/>
            <person name="Kyrpides N."/>
            <person name="Ivanova N."/>
            <person name="Richardson P."/>
        </authorList>
    </citation>
    <scope>NUCLEOTIDE SEQUENCE [LARGE SCALE GENOMIC DNA]</scope>
    <source>
        <strain>CC9605</strain>
    </source>
</reference>
<keyword id="KW-0963">Cytoplasm</keyword>
<keyword id="KW-0378">Hydrolase</keyword>
<keyword id="KW-0479">Metal-binding</keyword>
<keyword id="KW-0533">Nickel</keyword>
<accession>Q3AGD0</accession>
<name>URE1_SYNSC</name>
<feature type="chain" id="PRO_0000239888" description="Urease subunit alpha">
    <location>
        <begin position="1"/>
        <end position="569"/>
    </location>
</feature>
<feature type="domain" description="Urease" evidence="1">
    <location>
        <begin position="131"/>
        <end position="569"/>
    </location>
</feature>
<feature type="active site" description="Proton donor" evidence="1">
    <location>
        <position position="322"/>
    </location>
</feature>
<feature type="binding site" evidence="1">
    <location>
        <position position="136"/>
    </location>
    <ligand>
        <name>Ni(2+)</name>
        <dbReference type="ChEBI" id="CHEBI:49786"/>
        <label>1</label>
    </ligand>
</feature>
<feature type="binding site" evidence="1">
    <location>
        <position position="138"/>
    </location>
    <ligand>
        <name>Ni(2+)</name>
        <dbReference type="ChEBI" id="CHEBI:49786"/>
        <label>1</label>
    </ligand>
</feature>
<feature type="binding site" description="via carbamate group" evidence="1">
    <location>
        <position position="219"/>
    </location>
    <ligand>
        <name>Ni(2+)</name>
        <dbReference type="ChEBI" id="CHEBI:49786"/>
        <label>1</label>
    </ligand>
</feature>
<feature type="binding site" description="via carbamate group" evidence="1">
    <location>
        <position position="219"/>
    </location>
    <ligand>
        <name>Ni(2+)</name>
        <dbReference type="ChEBI" id="CHEBI:49786"/>
        <label>2</label>
    </ligand>
</feature>
<feature type="binding site" evidence="1">
    <location>
        <position position="221"/>
    </location>
    <ligand>
        <name>substrate</name>
    </ligand>
</feature>
<feature type="binding site" evidence="1">
    <location>
        <position position="248"/>
    </location>
    <ligand>
        <name>Ni(2+)</name>
        <dbReference type="ChEBI" id="CHEBI:49786"/>
        <label>2</label>
    </ligand>
</feature>
<feature type="binding site" evidence="1">
    <location>
        <position position="274"/>
    </location>
    <ligand>
        <name>Ni(2+)</name>
        <dbReference type="ChEBI" id="CHEBI:49786"/>
        <label>2</label>
    </ligand>
</feature>
<feature type="binding site" evidence="1">
    <location>
        <position position="362"/>
    </location>
    <ligand>
        <name>Ni(2+)</name>
        <dbReference type="ChEBI" id="CHEBI:49786"/>
        <label>1</label>
    </ligand>
</feature>
<feature type="modified residue" description="N6-carboxylysine" evidence="1">
    <location>
        <position position="219"/>
    </location>
</feature>
<gene>
    <name evidence="1" type="primary">ureC</name>
    <name type="ordered locus">Syncc9605_2627</name>
</gene>
<protein>
    <recommendedName>
        <fullName evidence="1">Urease subunit alpha</fullName>
        <ecNumber evidence="1">3.5.1.5</ecNumber>
    </recommendedName>
    <alternativeName>
        <fullName evidence="1">Urea amidohydrolase subunit alpha</fullName>
    </alternativeName>
</protein>
<organism>
    <name type="scientific">Synechococcus sp. (strain CC9605)</name>
    <dbReference type="NCBI Taxonomy" id="110662"/>
    <lineage>
        <taxon>Bacteria</taxon>
        <taxon>Bacillati</taxon>
        <taxon>Cyanobacteriota</taxon>
        <taxon>Cyanophyceae</taxon>
        <taxon>Synechococcales</taxon>
        <taxon>Synechococcaceae</taxon>
        <taxon>Synechococcus</taxon>
    </lineage>
</organism>
<dbReference type="EC" id="3.5.1.5" evidence="1"/>
<dbReference type="EMBL" id="CP000110">
    <property type="protein sequence ID" value="ABB36352.1"/>
    <property type="molecule type" value="Genomic_DNA"/>
</dbReference>
<dbReference type="RefSeq" id="WP_011365547.1">
    <property type="nucleotide sequence ID" value="NC_007516.1"/>
</dbReference>
<dbReference type="SMR" id="Q3AGD0"/>
<dbReference type="STRING" id="110662.Syncc9605_2627"/>
<dbReference type="KEGG" id="syd:Syncc9605_2627"/>
<dbReference type="eggNOG" id="COG0804">
    <property type="taxonomic scope" value="Bacteria"/>
</dbReference>
<dbReference type="HOGENOM" id="CLU_000980_0_0_3"/>
<dbReference type="OrthoDB" id="9802793at2"/>
<dbReference type="UniPathway" id="UPA00258">
    <property type="reaction ID" value="UER00370"/>
</dbReference>
<dbReference type="GO" id="GO:0005737">
    <property type="term" value="C:cytoplasm"/>
    <property type="evidence" value="ECO:0007669"/>
    <property type="project" value="UniProtKB-SubCell"/>
</dbReference>
<dbReference type="GO" id="GO:0016151">
    <property type="term" value="F:nickel cation binding"/>
    <property type="evidence" value="ECO:0007669"/>
    <property type="project" value="UniProtKB-UniRule"/>
</dbReference>
<dbReference type="GO" id="GO:0009039">
    <property type="term" value="F:urease activity"/>
    <property type="evidence" value="ECO:0007669"/>
    <property type="project" value="UniProtKB-UniRule"/>
</dbReference>
<dbReference type="GO" id="GO:0043419">
    <property type="term" value="P:urea catabolic process"/>
    <property type="evidence" value="ECO:0007669"/>
    <property type="project" value="UniProtKB-UniRule"/>
</dbReference>
<dbReference type="CDD" id="cd00375">
    <property type="entry name" value="Urease_alpha"/>
    <property type="match status" value="1"/>
</dbReference>
<dbReference type="Gene3D" id="3.20.20.140">
    <property type="entry name" value="Metal-dependent hydrolases"/>
    <property type="match status" value="1"/>
</dbReference>
<dbReference type="Gene3D" id="2.30.40.10">
    <property type="entry name" value="Urease, subunit C, domain 1"/>
    <property type="match status" value="1"/>
</dbReference>
<dbReference type="HAMAP" id="MF_01953">
    <property type="entry name" value="Urease_alpha"/>
    <property type="match status" value="1"/>
</dbReference>
<dbReference type="InterPro" id="IPR006680">
    <property type="entry name" value="Amidohydro-rel"/>
</dbReference>
<dbReference type="InterPro" id="IPR011059">
    <property type="entry name" value="Metal-dep_hydrolase_composite"/>
</dbReference>
<dbReference type="InterPro" id="IPR032466">
    <property type="entry name" value="Metal_Hydrolase"/>
</dbReference>
<dbReference type="InterPro" id="IPR011612">
    <property type="entry name" value="Urease_alpha_N_dom"/>
</dbReference>
<dbReference type="InterPro" id="IPR050112">
    <property type="entry name" value="Urease_alpha_subunit"/>
</dbReference>
<dbReference type="InterPro" id="IPR017950">
    <property type="entry name" value="Urease_AS"/>
</dbReference>
<dbReference type="InterPro" id="IPR005848">
    <property type="entry name" value="Urease_asu"/>
</dbReference>
<dbReference type="InterPro" id="IPR017951">
    <property type="entry name" value="Urease_asu_c"/>
</dbReference>
<dbReference type="InterPro" id="IPR029754">
    <property type="entry name" value="Urease_Ni-bd"/>
</dbReference>
<dbReference type="NCBIfam" id="NF009685">
    <property type="entry name" value="PRK13206.1"/>
    <property type="match status" value="1"/>
</dbReference>
<dbReference type="NCBIfam" id="NF009686">
    <property type="entry name" value="PRK13207.1"/>
    <property type="match status" value="1"/>
</dbReference>
<dbReference type="NCBIfam" id="TIGR01792">
    <property type="entry name" value="urease_alph"/>
    <property type="match status" value="1"/>
</dbReference>
<dbReference type="PANTHER" id="PTHR43440">
    <property type="entry name" value="UREASE"/>
    <property type="match status" value="1"/>
</dbReference>
<dbReference type="PANTHER" id="PTHR43440:SF1">
    <property type="entry name" value="UREASE"/>
    <property type="match status" value="1"/>
</dbReference>
<dbReference type="Pfam" id="PF01979">
    <property type="entry name" value="Amidohydro_1"/>
    <property type="match status" value="1"/>
</dbReference>
<dbReference type="Pfam" id="PF00449">
    <property type="entry name" value="Urease_alpha"/>
    <property type="match status" value="1"/>
</dbReference>
<dbReference type="PRINTS" id="PR01752">
    <property type="entry name" value="UREASE"/>
</dbReference>
<dbReference type="SUPFAM" id="SSF51338">
    <property type="entry name" value="Composite domain of metallo-dependent hydrolases"/>
    <property type="match status" value="2"/>
</dbReference>
<dbReference type="SUPFAM" id="SSF51556">
    <property type="entry name" value="Metallo-dependent hydrolases"/>
    <property type="match status" value="1"/>
</dbReference>
<dbReference type="PROSITE" id="PS01120">
    <property type="entry name" value="UREASE_1"/>
    <property type="match status" value="1"/>
</dbReference>
<dbReference type="PROSITE" id="PS00145">
    <property type="entry name" value="UREASE_2"/>
    <property type="match status" value="1"/>
</dbReference>
<dbReference type="PROSITE" id="PS51368">
    <property type="entry name" value="UREASE_3"/>
    <property type="match status" value="1"/>
</dbReference>
<proteinExistence type="inferred from homology"/>
<evidence type="ECO:0000255" key="1">
    <source>
        <dbReference type="HAMAP-Rule" id="MF_01953"/>
    </source>
</evidence>
<comment type="catalytic activity">
    <reaction evidence="1">
        <text>urea + 2 H2O + H(+) = hydrogencarbonate + 2 NH4(+)</text>
        <dbReference type="Rhea" id="RHEA:20557"/>
        <dbReference type="ChEBI" id="CHEBI:15377"/>
        <dbReference type="ChEBI" id="CHEBI:15378"/>
        <dbReference type="ChEBI" id="CHEBI:16199"/>
        <dbReference type="ChEBI" id="CHEBI:17544"/>
        <dbReference type="ChEBI" id="CHEBI:28938"/>
        <dbReference type="EC" id="3.5.1.5"/>
    </reaction>
</comment>
<comment type="cofactor">
    <cofactor evidence="1">
        <name>Ni cation</name>
        <dbReference type="ChEBI" id="CHEBI:25516"/>
    </cofactor>
    <text evidence="1">Binds 2 nickel ions per subunit.</text>
</comment>
<comment type="pathway">
    <text evidence="1">Nitrogen metabolism; urea degradation; CO(2) and NH(3) from urea (urease route): step 1/1.</text>
</comment>
<comment type="subunit">
    <text evidence="1">Heterotrimer of UreA (gamma), UreB (beta) and UreC (alpha) subunits. Three heterotrimers associate to form the active enzyme.</text>
</comment>
<comment type="subcellular location">
    <subcellularLocation>
        <location evidence="1">Cytoplasm</location>
    </subcellularLocation>
</comment>
<comment type="PTM">
    <text evidence="1">Carboxylation allows a single lysine to coordinate two nickel ions.</text>
</comment>
<comment type="similarity">
    <text evidence="1">Belongs to the metallo-dependent hydrolases superfamily. Urease alpha subunit family.</text>
</comment>